<comment type="function">
    <text evidence="1">Together with LptD, is involved in the assembly of lipopolysaccharide (LPS) at the surface of the outer membrane. Required for the proper assembly of LptD. Binds LPS and may serve as the LPS recognition site at the outer membrane.</text>
</comment>
<comment type="subunit">
    <text evidence="1">Component of the lipopolysaccharide transport and assembly complex. Interacts with LptD.</text>
</comment>
<comment type="subcellular location">
    <subcellularLocation>
        <location evidence="1">Cell outer membrane</location>
        <topology evidence="1">Lipid-anchor</topology>
    </subcellularLocation>
</comment>
<comment type="similarity">
    <text evidence="1">Belongs to the LptE lipoprotein family.</text>
</comment>
<sequence>MRYLVTLLLSLAVLVTAGCGWHLRSTTQVPASMKTMILDSGDPNGPLSRAVRNQLRLNNVNLLDKDTTRKDVPSLRLGTVTISQDTASVFQDGQTAEYQMVMTVNASVLIPGHDIYPISTKVYRSFFDNPQMALAKDNEQAMIVQEMYDKAAEQLIRKLASVRAADIQATKEEATADNETAAPASTPARVSTTLSN</sequence>
<organism>
    <name type="scientific">Salmonella typhi</name>
    <dbReference type="NCBI Taxonomy" id="90370"/>
    <lineage>
        <taxon>Bacteria</taxon>
        <taxon>Pseudomonadati</taxon>
        <taxon>Pseudomonadota</taxon>
        <taxon>Gammaproteobacteria</taxon>
        <taxon>Enterobacterales</taxon>
        <taxon>Enterobacteriaceae</taxon>
        <taxon>Salmonella</taxon>
    </lineage>
</organism>
<protein>
    <recommendedName>
        <fullName evidence="1">LPS-assembly lipoprotein LptE</fullName>
    </recommendedName>
</protein>
<dbReference type="EMBL" id="AL513382">
    <property type="protein sequence ID" value="CAD05124.1"/>
    <property type="molecule type" value="Genomic_DNA"/>
</dbReference>
<dbReference type="EMBL" id="AE014613">
    <property type="protein sequence ID" value="AAO69823.1"/>
    <property type="molecule type" value="Genomic_DNA"/>
</dbReference>
<dbReference type="RefSeq" id="NP_455223.1">
    <property type="nucleotide sequence ID" value="NC_003198.1"/>
</dbReference>
<dbReference type="RefSeq" id="WP_001269949.1">
    <property type="nucleotide sequence ID" value="NZ_QXGZ01000014.1"/>
</dbReference>
<dbReference type="SMR" id="Q8Z8H6"/>
<dbReference type="STRING" id="220341.gene:17584705"/>
<dbReference type="KEGG" id="stt:t2220"/>
<dbReference type="KEGG" id="sty:STY0698"/>
<dbReference type="PATRIC" id="fig|220341.7.peg.702"/>
<dbReference type="eggNOG" id="COG2980">
    <property type="taxonomic scope" value="Bacteria"/>
</dbReference>
<dbReference type="HOGENOM" id="CLU_103309_1_1_6"/>
<dbReference type="OMA" id="ACGFHFQ"/>
<dbReference type="OrthoDB" id="5801564at2"/>
<dbReference type="Proteomes" id="UP000000541">
    <property type="component" value="Chromosome"/>
</dbReference>
<dbReference type="Proteomes" id="UP000002670">
    <property type="component" value="Chromosome"/>
</dbReference>
<dbReference type="GO" id="GO:0009279">
    <property type="term" value="C:cell outer membrane"/>
    <property type="evidence" value="ECO:0007669"/>
    <property type="project" value="UniProtKB-SubCell"/>
</dbReference>
<dbReference type="GO" id="GO:1990351">
    <property type="term" value="C:transporter complex"/>
    <property type="evidence" value="ECO:0007669"/>
    <property type="project" value="TreeGrafter"/>
</dbReference>
<dbReference type="GO" id="GO:0001530">
    <property type="term" value="F:lipopolysaccharide binding"/>
    <property type="evidence" value="ECO:0007669"/>
    <property type="project" value="TreeGrafter"/>
</dbReference>
<dbReference type="GO" id="GO:0043165">
    <property type="term" value="P:Gram-negative-bacterium-type cell outer membrane assembly"/>
    <property type="evidence" value="ECO:0007669"/>
    <property type="project" value="UniProtKB-UniRule"/>
</dbReference>
<dbReference type="GO" id="GO:0015920">
    <property type="term" value="P:lipopolysaccharide transport"/>
    <property type="evidence" value="ECO:0007669"/>
    <property type="project" value="TreeGrafter"/>
</dbReference>
<dbReference type="FunFam" id="3.30.160.150:FF:000001">
    <property type="entry name" value="LPS-assembly lipoprotein LptE"/>
    <property type="match status" value="1"/>
</dbReference>
<dbReference type="Gene3D" id="3.30.160.150">
    <property type="entry name" value="Lipoprotein like domain"/>
    <property type="match status" value="1"/>
</dbReference>
<dbReference type="HAMAP" id="MF_01186">
    <property type="entry name" value="LPS_assembly_LptE"/>
    <property type="match status" value="1"/>
</dbReference>
<dbReference type="InterPro" id="IPR007485">
    <property type="entry name" value="LPS_assembly_LptE"/>
</dbReference>
<dbReference type="NCBIfam" id="NF008062">
    <property type="entry name" value="PRK10796.1"/>
    <property type="match status" value="1"/>
</dbReference>
<dbReference type="PANTHER" id="PTHR38098">
    <property type="entry name" value="LPS-ASSEMBLY LIPOPROTEIN LPTE"/>
    <property type="match status" value="1"/>
</dbReference>
<dbReference type="PANTHER" id="PTHR38098:SF1">
    <property type="entry name" value="LPS-ASSEMBLY LIPOPROTEIN LPTE"/>
    <property type="match status" value="1"/>
</dbReference>
<dbReference type="Pfam" id="PF04390">
    <property type="entry name" value="LptE"/>
    <property type="match status" value="1"/>
</dbReference>
<dbReference type="PROSITE" id="PS51257">
    <property type="entry name" value="PROKAR_LIPOPROTEIN"/>
    <property type="match status" value="1"/>
</dbReference>
<evidence type="ECO:0000255" key="1">
    <source>
        <dbReference type="HAMAP-Rule" id="MF_01186"/>
    </source>
</evidence>
<evidence type="ECO:0000256" key="2">
    <source>
        <dbReference type="SAM" id="MobiDB-lite"/>
    </source>
</evidence>
<reference key="1">
    <citation type="journal article" date="2001" name="Nature">
        <title>Complete genome sequence of a multiple drug resistant Salmonella enterica serovar Typhi CT18.</title>
        <authorList>
            <person name="Parkhill J."/>
            <person name="Dougan G."/>
            <person name="James K.D."/>
            <person name="Thomson N.R."/>
            <person name="Pickard D."/>
            <person name="Wain J."/>
            <person name="Churcher C.M."/>
            <person name="Mungall K.L."/>
            <person name="Bentley S.D."/>
            <person name="Holden M.T.G."/>
            <person name="Sebaihia M."/>
            <person name="Baker S."/>
            <person name="Basham D."/>
            <person name="Brooks K."/>
            <person name="Chillingworth T."/>
            <person name="Connerton P."/>
            <person name="Cronin A."/>
            <person name="Davis P."/>
            <person name="Davies R.M."/>
            <person name="Dowd L."/>
            <person name="White N."/>
            <person name="Farrar J."/>
            <person name="Feltwell T."/>
            <person name="Hamlin N."/>
            <person name="Haque A."/>
            <person name="Hien T.T."/>
            <person name="Holroyd S."/>
            <person name="Jagels K."/>
            <person name="Krogh A."/>
            <person name="Larsen T.S."/>
            <person name="Leather S."/>
            <person name="Moule S."/>
            <person name="O'Gaora P."/>
            <person name="Parry C."/>
            <person name="Quail M.A."/>
            <person name="Rutherford K.M."/>
            <person name="Simmonds M."/>
            <person name="Skelton J."/>
            <person name="Stevens K."/>
            <person name="Whitehead S."/>
            <person name="Barrell B.G."/>
        </authorList>
    </citation>
    <scope>NUCLEOTIDE SEQUENCE [LARGE SCALE GENOMIC DNA]</scope>
    <source>
        <strain>CT18</strain>
    </source>
</reference>
<reference key="2">
    <citation type="journal article" date="2003" name="J. Bacteriol.">
        <title>Comparative genomics of Salmonella enterica serovar Typhi strains Ty2 and CT18.</title>
        <authorList>
            <person name="Deng W."/>
            <person name="Liou S.-R."/>
            <person name="Plunkett G. III"/>
            <person name="Mayhew G.F."/>
            <person name="Rose D.J."/>
            <person name="Burland V."/>
            <person name="Kodoyianni V."/>
            <person name="Schwartz D.C."/>
            <person name="Blattner F.R."/>
        </authorList>
    </citation>
    <scope>NUCLEOTIDE SEQUENCE [LARGE SCALE GENOMIC DNA]</scope>
    <source>
        <strain>ATCC 700931 / Ty2</strain>
    </source>
</reference>
<accession>Q8Z8H6</accession>
<accession>Q7C8K2</accession>
<keyword id="KW-0998">Cell outer membrane</keyword>
<keyword id="KW-0449">Lipoprotein</keyword>
<keyword id="KW-0472">Membrane</keyword>
<keyword id="KW-0564">Palmitate</keyword>
<keyword id="KW-0732">Signal</keyword>
<feature type="signal peptide" evidence="1">
    <location>
        <begin position="1"/>
        <end position="18"/>
    </location>
</feature>
<feature type="chain" id="PRO_0000281183" description="LPS-assembly lipoprotein LptE">
    <location>
        <begin position="19"/>
        <end position="196"/>
    </location>
</feature>
<feature type="region of interest" description="Disordered" evidence="2">
    <location>
        <begin position="171"/>
        <end position="196"/>
    </location>
</feature>
<feature type="lipid moiety-binding region" description="N-palmitoyl cysteine" evidence="1">
    <location>
        <position position="19"/>
    </location>
</feature>
<feature type="lipid moiety-binding region" description="S-diacylglycerol cysteine" evidence="1">
    <location>
        <position position="19"/>
    </location>
</feature>
<gene>
    <name evidence="1" type="primary">lptE</name>
    <name type="synonym">rlpB</name>
    <name type="ordered locus">STY0698</name>
    <name type="ordered locus">t2220</name>
</gene>
<proteinExistence type="inferred from homology"/>
<name>LPTE_SALTI</name>